<reference key="1">
    <citation type="journal article" date="2000" name="Proc. Natl. Acad. Sci. U.S.A.">
        <title>Archaeal adaptation to higher temperatures revealed by genomic sequence of Thermoplasma volcanium.</title>
        <authorList>
            <person name="Kawashima T."/>
            <person name="Amano N."/>
            <person name="Koike H."/>
            <person name="Makino S."/>
            <person name="Higuchi S."/>
            <person name="Kawashima-Ohya Y."/>
            <person name="Watanabe K."/>
            <person name="Yamazaki M."/>
            <person name="Kanehori K."/>
            <person name="Kawamoto T."/>
            <person name="Nunoshiba T."/>
            <person name="Yamamoto Y."/>
            <person name="Aramaki H."/>
            <person name="Makino K."/>
            <person name="Suzuki M."/>
        </authorList>
    </citation>
    <scope>NUCLEOTIDE SEQUENCE [LARGE SCALE GENOMIC DNA]</scope>
    <source>
        <strain>ATCC 51530 / DSM 4299 / JCM 9571 / NBRC 15438 / GSS1</strain>
    </source>
</reference>
<proteinExistence type="inferred from homology"/>
<accession>Q97BV5</accession>
<comment type="subunit">
    <text evidence="1">Part of the 50S ribosomal subunit.</text>
</comment>
<comment type="similarity">
    <text evidence="1">Belongs to the universal ribosomal protein uL30 family.</text>
</comment>
<keyword id="KW-0687">Ribonucleoprotein</keyword>
<keyword id="KW-0689">Ribosomal protein</keyword>
<evidence type="ECO:0000255" key="1">
    <source>
        <dbReference type="HAMAP-Rule" id="MF_01371"/>
    </source>
</evidence>
<evidence type="ECO:0000305" key="2"/>
<name>RL30_THEVO</name>
<dbReference type="EMBL" id="BA000011">
    <property type="protein sequence ID" value="BAB59492.1"/>
    <property type="molecule type" value="Genomic_DNA"/>
</dbReference>
<dbReference type="RefSeq" id="WP_010916604.1">
    <property type="nucleotide sequence ID" value="NC_002689.2"/>
</dbReference>
<dbReference type="SMR" id="Q97BV5"/>
<dbReference type="STRING" id="273116.gene:9381127"/>
<dbReference type="PaxDb" id="273116-14324565"/>
<dbReference type="GeneID" id="1440862"/>
<dbReference type="KEGG" id="tvo:TVG0343183"/>
<dbReference type="eggNOG" id="arCOG04086">
    <property type="taxonomic scope" value="Archaea"/>
</dbReference>
<dbReference type="HOGENOM" id="CLU_055156_6_0_2"/>
<dbReference type="OrthoDB" id="6379at2157"/>
<dbReference type="PhylomeDB" id="Q97BV5"/>
<dbReference type="Proteomes" id="UP000001017">
    <property type="component" value="Chromosome"/>
</dbReference>
<dbReference type="GO" id="GO:0022625">
    <property type="term" value="C:cytosolic large ribosomal subunit"/>
    <property type="evidence" value="ECO:0007669"/>
    <property type="project" value="TreeGrafter"/>
</dbReference>
<dbReference type="GO" id="GO:0003723">
    <property type="term" value="F:RNA binding"/>
    <property type="evidence" value="ECO:0007669"/>
    <property type="project" value="TreeGrafter"/>
</dbReference>
<dbReference type="GO" id="GO:0003735">
    <property type="term" value="F:structural constituent of ribosome"/>
    <property type="evidence" value="ECO:0007669"/>
    <property type="project" value="InterPro"/>
</dbReference>
<dbReference type="GO" id="GO:0000463">
    <property type="term" value="P:maturation of LSU-rRNA from tricistronic rRNA transcript (SSU-rRNA, 5.8S rRNA, LSU-rRNA)"/>
    <property type="evidence" value="ECO:0007669"/>
    <property type="project" value="TreeGrafter"/>
</dbReference>
<dbReference type="GO" id="GO:0006412">
    <property type="term" value="P:translation"/>
    <property type="evidence" value="ECO:0007669"/>
    <property type="project" value="UniProtKB-UniRule"/>
</dbReference>
<dbReference type="CDD" id="cd01657">
    <property type="entry name" value="Ribosomal_L7_archeal_euk"/>
    <property type="match status" value="1"/>
</dbReference>
<dbReference type="Gene3D" id="1.10.15.30">
    <property type="match status" value="1"/>
</dbReference>
<dbReference type="Gene3D" id="3.30.1390.20">
    <property type="entry name" value="Ribosomal protein L30, ferredoxin-like fold domain"/>
    <property type="match status" value="1"/>
</dbReference>
<dbReference type="HAMAP" id="MF_01371_A">
    <property type="entry name" value="Ribosomal_uL30_A"/>
    <property type="match status" value="1"/>
</dbReference>
<dbReference type="InterPro" id="IPR036919">
    <property type="entry name" value="Ribo_uL30_ferredoxin-like_sf"/>
</dbReference>
<dbReference type="InterPro" id="IPR039699">
    <property type="entry name" value="Ribosomal_uL30"/>
</dbReference>
<dbReference type="InterPro" id="IPR005997">
    <property type="entry name" value="Ribosomal_uL30_arc"/>
</dbReference>
<dbReference type="InterPro" id="IPR035808">
    <property type="entry name" value="Ribosomal_uL30_euk_arc"/>
</dbReference>
<dbReference type="InterPro" id="IPR016082">
    <property type="entry name" value="Ribosomal_uL30_ferredoxin-like"/>
</dbReference>
<dbReference type="NCBIfam" id="NF004711">
    <property type="entry name" value="PRK06049.1"/>
    <property type="match status" value="1"/>
</dbReference>
<dbReference type="NCBIfam" id="TIGR01309">
    <property type="entry name" value="uL30_arch"/>
    <property type="match status" value="1"/>
</dbReference>
<dbReference type="PANTHER" id="PTHR11524">
    <property type="entry name" value="60S RIBOSOMAL PROTEIN L7"/>
    <property type="match status" value="1"/>
</dbReference>
<dbReference type="PANTHER" id="PTHR11524:SF16">
    <property type="entry name" value="LARGE RIBOSOMAL SUBUNIT PROTEIN UL30"/>
    <property type="match status" value="1"/>
</dbReference>
<dbReference type="Pfam" id="PF00327">
    <property type="entry name" value="Ribosomal_L30"/>
    <property type="match status" value="1"/>
</dbReference>
<dbReference type="SUPFAM" id="SSF55129">
    <property type="entry name" value="Ribosomal protein L30p/L7e"/>
    <property type="match status" value="1"/>
</dbReference>
<sequence length="165" mass="18781">MLAVIRIRGRTGIKQDIEDTAHLLRLNRINHLVLLQEDAVTKGMLQKVKDYVTWGEIDVDTLEVLLKNRCLFKGRRKLTEEELKDVTGFGSYRDLAKALVDGKIKFSEINDVVPVIRLNPPYKGYEAIKTSYRNGGSAGYRGKDINNLIRRMIIPGVDLNGQREN</sequence>
<organism>
    <name type="scientific">Thermoplasma volcanium (strain ATCC 51530 / DSM 4299 / JCM 9571 / NBRC 15438 / GSS1)</name>
    <dbReference type="NCBI Taxonomy" id="273116"/>
    <lineage>
        <taxon>Archaea</taxon>
        <taxon>Methanobacteriati</taxon>
        <taxon>Thermoplasmatota</taxon>
        <taxon>Thermoplasmata</taxon>
        <taxon>Thermoplasmatales</taxon>
        <taxon>Thermoplasmataceae</taxon>
        <taxon>Thermoplasma</taxon>
    </lineage>
</organism>
<protein>
    <recommendedName>
        <fullName evidence="1">Large ribosomal subunit protein uL30</fullName>
    </recommendedName>
    <alternativeName>
        <fullName evidence="2">50S ribosomal protein L30</fullName>
    </alternativeName>
</protein>
<feature type="chain" id="PRO_0000273917" description="Large ribosomal subunit protein uL30">
    <location>
        <begin position="1"/>
        <end position="165"/>
    </location>
</feature>
<gene>
    <name evidence="1" type="primary">rpl30</name>
    <name type="ordered locus">TV0350</name>
    <name type="ORF">TVG0343183</name>
</gene>